<accession>B7MT77</accession>
<feature type="chain" id="PRO_1000196245" description="Large ribosomal subunit protein bL9">
    <location>
        <begin position="1"/>
        <end position="149"/>
    </location>
</feature>
<feature type="modified residue" description="N6-acetyllysine" evidence="1">
    <location>
        <position position="89"/>
    </location>
</feature>
<reference key="1">
    <citation type="journal article" date="2009" name="PLoS Genet.">
        <title>Organised genome dynamics in the Escherichia coli species results in highly diverse adaptive paths.</title>
        <authorList>
            <person name="Touchon M."/>
            <person name="Hoede C."/>
            <person name="Tenaillon O."/>
            <person name="Barbe V."/>
            <person name="Baeriswyl S."/>
            <person name="Bidet P."/>
            <person name="Bingen E."/>
            <person name="Bonacorsi S."/>
            <person name="Bouchier C."/>
            <person name="Bouvet O."/>
            <person name="Calteau A."/>
            <person name="Chiapello H."/>
            <person name="Clermont O."/>
            <person name="Cruveiller S."/>
            <person name="Danchin A."/>
            <person name="Diard M."/>
            <person name="Dossat C."/>
            <person name="Karoui M.E."/>
            <person name="Frapy E."/>
            <person name="Garry L."/>
            <person name="Ghigo J.M."/>
            <person name="Gilles A.M."/>
            <person name="Johnson J."/>
            <person name="Le Bouguenec C."/>
            <person name="Lescat M."/>
            <person name="Mangenot S."/>
            <person name="Martinez-Jehanne V."/>
            <person name="Matic I."/>
            <person name="Nassif X."/>
            <person name="Oztas S."/>
            <person name="Petit M.A."/>
            <person name="Pichon C."/>
            <person name="Rouy Z."/>
            <person name="Ruf C.S."/>
            <person name="Schneider D."/>
            <person name="Tourret J."/>
            <person name="Vacherie B."/>
            <person name="Vallenet D."/>
            <person name="Medigue C."/>
            <person name="Rocha E.P.C."/>
            <person name="Denamur E."/>
        </authorList>
    </citation>
    <scope>NUCLEOTIDE SEQUENCE [LARGE SCALE GENOMIC DNA]</scope>
    <source>
        <strain>ED1a</strain>
    </source>
</reference>
<comment type="function">
    <text evidence="1">Binds to the 23S rRNA.</text>
</comment>
<comment type="similarity">
    <text evidence="1">Belongs to the bacterial ribosomal protein bL9 family.</text>
</comment>
<evidence type="ECO:0000255" key="1">
    <source>
        <dbReference type="HAMAP-Rule" id="MF_00503"/>
    </source>
</evidence>
<evidence type="ECO:0000305" key="2"/>
<proteinExistence type="inferred from homology"/>
<protein>
    <recommendedName>
        <fullName evidence="1">Large ribosomal subunit protein bL9</fullName>
    </recommendedName>
    <alternativeName>
        <fullName evidence="2">50S ribosomal protein L9</fullName>
    </alternativeName>
</protein>
<sequence>MQVILLDKVANLGSLGDQVNVKAGYARNFLVPQGKAVPATKKNIEFFEARRAELEAKLAEVLAAANARAEKINALETVTIASKAGDEGKLFGSIGTRDIADAVTAAGVEVAKSEVRLPNGVLRTTGEHEVSFQVHSEVFAKVIVNVVAE</sequence>
<keyword id="KW-0007">Acetylation</keyword>
<keyword id="KW-0687">Ribonucleoprotein</keyword>
<keyword id="KW-0689">Ribosomal protein</keyword>
<keyword id="KW-0694">RNA-binding</keyword>
<keyword id="KW-0699">rRNA-binding</keyword>
<dbReference type="EMBL" id="CU928162">
    <property type="protein sequence ID" value="CAR11153.2"/>
    <property type="molecule type" value="Genomic_DNA"/>
</dbReference>
<dbReference type="RefSeq" id="WP_001196062.1">
    <property type="nucleotide sequence ID" value="NC_011745.1"/>
</dbReference>
<dbReference type="SMR" id="B7MT77"/>
<dbReference type="GeneID" id="93777620"/>
<dbReference type="KEGG" id="ecq:ECED1_5053"/>
<dbReference type="HOGENOM" id="CLU_078938_4_1_6"/>
<dbReference type="Proteomes" id="UP000000748">
    <property type="component" value="Chromosome"/>
</dbReference>
<dbReference type="GO" id="GO:1990904">
    <property type="term" value="C:ribonucleoprotein complex"/>
    <property type="evidence" value="ECO:0007669"/>
    <property type="project" value="UniProtKB-KW"/>
</dbReference>
<dbReference type="GO" id="GO:0005840">
    <property type="term" value="C:ribosome"/>
    <property type="evidence" value="ECO:0007669"/>
    <property type="project" value="UniProtKB-KW"/>
</dbReference>
<dbReference type="GO" id="GO:0019843">
    <property type="term" value="F:rRNA binding"/>
    <property type="evidence" value="ECO:0007669"/>
    <property type="project" value="UniProtKB-UniRule"/>
</dbReference>
<dbReference type="GO" id="GO:0003735">
    <property type="term" value="F:structural constituent of ribosome"/>
    <property type="evidence" value="ECO:0007669"/>
    <property type="project" value="InterPro"/>
</dbReference>
<dbReference type="GO" id="GO:0006412">
    <property type="term" value="P:translation"/>
    <property type="evidence" value="ECO:0007669"/>
    <property type="project" value="UniProtKB-UniRule"/>
</dbReference>
<dbReference type="FunFam" id="3.10.430.100:FF:000001">
    <property type="entry name" value="50S ribosomal protein L9"/>
    <property type="match status" value="1"/>
</dbReference>
<dbReference type="FunFam" id="3.40.5.10:FF:000001">
    <property type="entry name" value="50S ribosomal protein L9"/>
    <property type="match status" value="1"/>
</dbReference>
<dbReference type="Gene3D" id="3.10.430.100">
    <property type="entry name" value="Ribosomal protein L9, C-terminal domain"/>
    <property type="match status" value="1"/>
</dbReference>
<dbReference type="Gene3D" id="3.40.5.10">
    <property type="entry name" value="Ribosomal protein L9, N-terminal domain"/>
    <property type="match status" value="1"/>
</dbReference>
<dbReference type="HAMAP" id="MF_00503">
    <property type="entry name" value="Ribosomal_bL9"/>
    <property type="match status" value="1"/>
</dbReference>
<dbReference type="InterPro" id="IPR000244">
    <property type="entry name" value="Ribosomal_bL9"/>
</dbReference>
<dbReference type="InterPro" id="IPR009027">
    <property type="entry name" value="Ribosomal_bL9/RNase_H1_N"/>
</dbReference>
<dbReference type="InterPro" id="IPR020594">
    <property type="entry name" value="Ribosomal_bL9_bac/chp"/>
</dbReference>
<dbReference type="InterPro" id="IPR020069">
    <property type="entry name" value="Ribosomal_bL9_C"/>
</dbReference>
<dbReference type="InterPro" id="IPR036791">
    <property type="entry name" value="Ribosomal_bL9_C_sf"/>
</dbReference>
<dbReference type="InterPro" id="IPR020070">
    <property type="entry name" value="Ribosomal_bL9_N"/>
</dbReference>
<dbReference type="InterPro" id="IPR036935">
    <property type="entry name" value="Ribosomal_bL9_N_sf"/>
</dbReference>
<dbReference type="NCBIfam" id="TIGR00158">
    <property type="entry name" value="L9"/>
    <property type="match status" value="1"/>
</dbReference>
<dbReference type="PANTHER" id="PTHR21368">
    <property type="entry name" value="50S RIBOSOMAL PROTEIN L9"/>
    <property type="match status" value="1"/>
</dbReference>
<dbReference type="Pfam" id="PF03948">
    <property type="entry name" value="Ribosomal_L9_C"/>
    <property type="match status" value="1"/>
</dbReference>
<dbReference type="Pfam" id="PF01281">
    <property type="entry name" value="Ribosomal_L9_N"/>
    <property type="match status" value="1"/>
</dbReference>
<dbReference type="SUPFAM" id="SSF55658">
    <property type="entry name" value="L9 N-domain-like"/>
    <property type="match status" value="1"/>
</dbReference>
<dbReference type="SUPFAM" id="SSF55653">
    <property type="entry name" value="Ribosomal protein L9 C-domain"/>
    <property type="match status" value="1"/>
</dbReference>
<dbReference type="PROSITE" id="PS00651">
    <property type="entry name" value="RIBOSOMAL_L9"/>
    <property type="match status" value="1"/>
</dbReference>
<gene>
    <name evidence="1" type="primary">rplI</name>
    <name type="ordered locus">ECED1_5053</name>
</gene>
<organism>
    <name type="scientific">Escherichia coli O81 (strain ED1a)</name>
    <dbReference type="NCBI Taxonomy" id="585397"/>
    <lineage>
        <taxon>Bacteria</taxon>
        <taxon>Pseudomonadati</taxon>
        <taxon>Pseudomonadota</taxon>
        <taxon>Gammaproteobacteria</taxon>
        <taxon>Enterobacterales</taxon>
        <taxon>Enterobacteriaceae</taxon>
        <taxon>Escherichia</taxon>
    </lineage>
</organism>
<name>RL9_ECO81</name>